<comment type="function">
    <text evidence="2">Prolyl 3-hydroxylase that catalyzes 3-hydroxylation of 'Pro-62' of small ribosomal subunit uS12 (rps23), thereby regulating protein translation termination efficiency. Involved in stress granule formation.</text>
</comment>
<comment type="catalytic activity">
    <reaction evidence="2">
        <text>[ribosomal protein uS12]-L-proline + 2-oxoglutarate + O2 = [ribosomal protein uS12]-(3S)-3-hydroxy-L-proline + succinate + CO2</text>
        <dbReference type="Rhea" id="RHEA:54156"/>
        <dbReference type="Rhea" id="RHEA-COMP:13816"/>
        <dbReference type="Rhea" id="RHEA-COMP:13818"/>
        <dbReference type="ChEBI" id="CHEBI:15379"/>
        <dbReference type="ChEBI" id="CHEBI:16526"/>
        <dbReference type="ChEBI" id="CHEBI:16810"/>
        <dbReference type="ChEBI" id="CHEBI:30031"/>
        <dbReference type="ChEBI" id="CHEBI:50342"/>
        <dbReference type="ChEBI" id="CHEBI:85428"/>
    </reaction>
</comment>
<comment type="cofactor">
    <cofactor evidence="3">
        <name>Fe(2+)</name>
        <dbReference type="ChEBI" id="CHEBI:29033"/>
    </cofactor>
    <text evidence="3">Binds 1 Fe(2+) ion per subunit.</text>
</comment>
<comment type="cofactor">
    <cofactor evidence="2">
        <name>L-ascorbate</name>
        <dbReference type="ChEBI" id="CHEBI:38290"/>
    </cofactor>
</comment>
<comment type="subunit">
    <text evidence="2">Monomer.</text>
</comment>
<comment type="subcellular location">
    <subcellularLocation>
        <location evidence="2">Cytoplasm</location>
    </subcellularLocation>
    <subcellularLocation>
        <location evidence="2">Nucleus</location>
    </subcellularLocation>
</comment>
<comment type="similarity">
    <text evidence="5">Belongs to the TPA1 family.</text>
</comment>
<organism>
    <name type="scientific">Xenopus laevis</name>
    <name type="common">African clawed frog</name>
    <dbReference type="NCBI Taxonomy" id="8355"/>
    <lineage>
        <taxon>Eukaryota</taxon>
        <taxon>Metazoa</taxon>
        <taxon>Chordata</taxon>
        <taxon>Craniata</taxon>
        <taxon>Vertebrata</taxon>
        <taxon>Euteleostomi</taxon>
        <taxon>Amphibia</taxon>
        <taxon>Batrachia</taxon>
        <taxon>Anura</taxon>
        <taxon>Pipoidea</taxon>
        <taxon>Pipidae</taxon>
        <taxon>Xenopodinae</taxon>
        <taxon>Xenopus</taxon>
        <taxon>Xenopus</taxon>
    </lineage>
</organism>
<dbReference type="EC" id="1.14.11.-"/>
<dbReference type="EMBL" id="BC077268">
    <property type="protein sequence ID" value="AAH77268.1"/>
    <property type="molecule type" value="mRNA"/>
</dbReference>
<dbReference type="RefSeq" id="NP_001086660.1">
    <property type="nucleotide sequence ID" value="NM_001093191.1"/>
</dbReference>
<dbReference type="SMR" id="Q6DE73"/>
<dbReference type="DNASU" id="446495"/>
<dbReference type="GeneID" id="446495"/>
<dbReference type="KEGG" id="xla:446495"/>
<dbReference type="AGR" id="Xenbase:XB-GENE-923206"/>
<dbReference type="CTD" id="446495"/>
<dbReference type="Xenbase" id="XB-GENE-923206">
    <property type="gene designation" value="ogfod1.L"/>
</dbReference>
<dbReference type="OrthoDB" id="430522at2759"/>
<dbReference type="Proteomes" id="UP000186698">
    <property type="component" value="Chromosome 4L"/>
</dbReference>
<dbReference type="Bgee" id="446495">
    <property type="expression patterns" value="Expressed in pancreas and 19 other cell types or tissues"/>
</dbReference>
<dbReference type="GO" id="GO:0005737">
    <property type="term" value="C:cytoplasm"/>
    <property type="evidence" value="ECO:0000318"/>
    <property type="project" value="GO_Central"/>
</dbReference>
<dbReference type="GO" id="GO:0010494">
    <property type="term" value="C:cytoplasmic stress granule"/>
    <property type="evidence" value="ECO:0000250"/>
    <property type="project" value="UniProtKB"/>
</dbReference>
<dbReference type="GO" id="GO:0005634">
    <property type="term" value="C:nucleus"/>
    <property type="evidence" value="ECO:0007669"/>
    <property type="project" value="UniProtKB-SubCell"/>
</dbReference>
<dbReference type="GO" id="GO:0005506">
    <property type="term" value="F:iron ion binding"/>
    <property type="evidence" value="ECO:0007669"/>
    <property type="project" value="InterPro"/>
</dbReference>
<dbReference type="GO" id="GO:0031418">
    <property type="term" value="F:L-ascorbic acid binding"/>
    <property type="evidence" value="ECO:0007669"/>
    <property type="project" value="UniProtKB-KW"/>
</dbReference>
<dbReference type="GO" id="GO:0031544">
    <property type="term" value="F:peptidyl-proline 3-dioxygenase activity"/>
    <property type="evidence" value="ECO:0000250"/>
    <property type="project" value="UniProtKB"/>
</dbReference>
<dbReference type="GO" id="GO:0031543">
    <property type="term" value="F:peptidyl-proline dioxygenase activity"/>
    <property type="evidence" value="ECO:0000250"/>
    <property type="project" value="UniProtKB"/>
</dbReference>
<dbReference type="GO" id="GO:0008283">
    <property type="term" value="P:cell population proliferation"/>
    <property type="evidence" value="ECO:0000250"/>
    <property type="project" value="UniProtKB"/>
</dbReference>
<dbReference type="GO" id="GO:0018126">
    <property type="term" value="P:protein hydroxylation"/>
    <property type="evidence" value="ECO:0000250"/>
    <property type="project" value="UniProtKB"/>
</dbReference>
<dbReference type="GO" id="GO:0006449">
    <property type="term" value="P:regulation of translational termination"/>
    <property type="evidence" value="ECO:0000250"/>
    <property type="project" value="UniProtKB"/>
</dbReference>
<dbReference type="GO" id="GO:0034063">
    <property type="term" value="P:stress granule assembly"/>
    <property type="evidence" value="ECO:0000250"/>
    <property type="project" value="UniProtKB"/>
</dbReference>
<dbReference type="FunFam" id="2.60.120.620:FF:000009">
    <property type="entry name" value="Prolyl 3-hydroxylase OGFOD1 isoform 1"/>
    <property type="match status" value="1"/>
</dbReference>
<dbReference type="FunFam" id="2.60.120.620:FF:000010">
    <property type="entry name" value="Prolyl 3-hydroxylase OGFOD1 isoform 1"/>
    <property type="match status" value="1"/>
</dbReference>
<dbReference type="Gene3D" id="2.60.120.620">
    <property type="entry name" value="q2cbj1_9rhob like domain"/>
    <property type="match status" value="2"/>
</dbReference>
<dbReference type="InterPro" id="IPR005123">
    <property type="entry name" value="Oxoglu/Fe-dep_dioxygenase_dom"/>
</dbReference>
<dbReference type="InterPro" id="IPR019601">
    <property type="entry name" value="Oxoglutarate/Fe-dep_Oase_C"/>
</dbReference>
<dbReference type="InterPro" id="IPR006620">
    <property type="entry name" value="Pro_4_hyd_alph"/>
</dbReference>
<dbReference type="InterPro" id="IPR039558">
    <property type="entry name" value="TPA1/OFD1_N"/>
</dbReference>
<dbReference type="InterPro" id="IPR051842">
    <property type="entry name" value="uS12_prolyl_hydroxylase"/>
</dbReference>
<dbReference type="PANTHER" id="PTHR12117">
    <property type="entry name" value="HISTONE ACETYLTRANSFERASE COMPLEX"/>
    <property type="match status" value="1"/>
</dbReference>
<dbReference type="PANTHER" id="PTHR12117:SF0">
    <property type="entry name" value="PROLYL 3-HYDROXYLASE OGFOD1"/>
    <property type="match status" value="1"/>
</dbReference>
<dbReference type="Pfam" id="PF13661">
    <property type="entry name" value="2OG-FeII_Oxy_4"/>
    <property type="match status" value="1"/>
</dbReference>
<dbReference type="Pfam" id="PF10637">
    <property type="entry name" value="Ofd1_CTDD"/>
    <property type="match status" value="1"/>
</dbReference>
<dbReference type="SMART" id="SM00702">
    <property type="entry name" value="P4Hc"/>
    <property type="match status" value="1"/>
</dbReference>
<dbReference type="PROSITE" id="PS51471">
    <property type="entry name" value="FE2OG_OXY"/>
    <property type="match status" value="1"/>
</dbReference>
<protein>
    <recommendedName>
        <fullName>Prolyl 3-hydroxylase OGFOD1</fullName>
        <ecNumber>1.14.11.-</ecNumber>
    </recommendedName>
    <alternativeName>
        <fullName>2-oxoglutarate and iron-dependent oxygenase domain-containing protein 1</fullName>
    </alternativeName>
    <alternativeName>
        <fullName>uS12 prolyl 3-hydroxylase</fullName>
    </alternativeName>
</protein>
<reference key="1">
    <citation type="submission" date="2004-07" db="EMBL/GenBank/DDBJ databases">
        <authorList>
            <consortium name="NIH - Xenopus Gene Collection (XGC) project"/>
        </authorList>
    </citation>
    <scope>NUCLEOTIDE SEQUENCE [LARGE SCALE MRNA]</scope>
    <source>
        <tissue>Kidney</tissue>
    </source>
</reference>
<evidence type="ECO:0000250" key="1">
    <source>
        <dbReference type="UniProtKB" id="P40032"/>
    </source>
</evidence>
<evidence type="ECO:0000250" key="2">
    <source>
        <dbReference type="UniProtKB" id="Q8N543"/>
    </source>
</evidence>
<evidence type="ECO:0000255" key="3">
    <source>
        <dbReference type="PROSITE-ProRule" id="PRU00805"/>
    </source>
</evidence>
<evidence type="ECO:0000256" key="4">
    <source>
        <dbReference type="SAM" id="MobiDB-lite"/>
    </source>
</evidence>
<evidence type="ECO:0000305" key="5"/>
<sequence>MTGKRGTAAGTDGSGNKKGKREFKAKLSGLLAEQTCRDSVKEAWEGNQGGQFGSVALDSVPFPHGVIHPFIHNSDFLEELKEELLNLNFQPKSNDLYQFKQSEDLKNRKESHIKALRHVLFEDFRQWLSNITNVELEKTVDISCAQYGYTDTLLCHDDELEGRRFAFILYLVPEWSKSDGGSLDLYGMDDNGQPGPIVKSLVPRWNSLVFFEVSPVSFHQVSEVLSDGKCRLSVSGWFHGCSLERPPRGLDHPPVRSPHIPHDDQILYEWINPSYLSLESQAQIQEEFEERSEILLKDFLKADKFQAICAALETQSITLEKCGPPNKRCYDRAHGDFPGVIGSCMELLRSEAFFLFLSNFTGLKLHFLASNNEESDEGEGPSEPNTVSQQGASSEDDKVPSCSGELRHWQHSYYTMIHDLDPERHEFALDLLLFCGCDDWEAEYGGFTSYIAKEEDEELLTVYPENNCLALVYRDKETMRFVKHINHKSQQRDAKNTKHKGFWDFAFVYYE</sequence>
<gene>
    <name type="primary">ogfod1</name>
</gene>
<accession>Q6DE73</accession>
<feature type="chain" id="PRO_0000288977" description="Prolyl 3-hydroxylase OGFOD1">
    <location>
        <begin position="1"/>
        <end position="511"/>
    </location>
</feature>
<feature type="domain" description="Fe2OG dioxygenase" evidence="3">
    <location>
        <begin position="138"/>
        <end position="240"/>
    </location>
</feature>
<feature type="region of interest" description="Disordered" evidence="4">
    <location>
        <begin position="1"/>
        <end position="20"/>
    </location>
</feature>
<feature type="region of interest" description="Disordered" evidence="4">
    <location>
        <begin position="372"/>
        <end position="403"/>
    </location>
</feature>
<feature type="binding site" evidence="1 3">
    <location>
        <position position="156"/>
    </location>
    <ligand>
        <name>Fe cation</name>
        <dbReference type="ChEBI" id="CHEBI:24875"/>
    </ligand>
</feature>
<feature type="binding site" evidence="3">
    <location>
        <position position="158"/>
    </location>
    <ligand>
        <name>Fe cation</name>
        <dbReference type="ChEBI" id="CHEBI:24875"/>
    </ligand>
</feature>
<feature type="binding site" evidence="1">
    <location>
        <position position="170"/>
    </location>
    <ligand>
        <name>2-oxoglutarate</name>
        <dbReference type="ChEBI" id="CHEBI:16810"/>
    </ligand>
</feature>
<feature type="binding site" evidence="1 3">
    <location>
        <position position="219"/>
    </location>
    <ligand>
        <name>Fe cation</name>
        <dbReference type="ChEBI" id="CHEBI:24875"/>
    </ligand>
</feature>
<feature type="binding site" evidence="1 3">
    <location>
        <position position="231"/>
    </location>
    <ligand>
        <name>2-oxoglutarate</name>
        <dbReference type="ChEBI" id="CHEBI:16810"/>
    </ligand>
</feature>
<proteinExistence type="evidence at transcript level"/>
<name>OGFD1_XENLA</name>
<keyword id="KW-0963">Cytoplasm</keyword>
<keyword id="KW-0223">Dioxygenase</keyword>
<keyword id="KW-0408">Iron</keyword>
<keyword id="KW-0479">Metal-binding</keyword>
<keyword id="KW-0539">Nucleus</keyword>
<keyword id="KW-0560">Oxidoreductase</keyword>
<keyword id="KW-1185">Reference proteome</keyword>
<keyword id="KW-0847">Vitamin C</keyword>